<organism>
    <name type="scientific">Salmonella paratyphi A (strain ATCC 9150 / SARB42)</name>
    <dbReference type="NCBI Taxonomy" id="295319"/>
    <lineage>
        <taxon>Bacteria</taxon>
        <taxon>Pseudomonadati</taxon>
        <taxon>Pseudomonadota</taxon>
        <taxon>Gammaproteobacteria</taxon>
        <taxon>Enterobacterales</taxon>
        <taxon>Enterobacteriaceae</taxon>
        <taxon>Salmonella</taxon>
    </lineage>
</organism>
<comment type="function">
    <text evidence="1">Nucleotide-binding protein.</text>
</comment>
<comment type="similarity">
    <text evidence="1">Belongs to the YajQ family.</text>
</comment>
<comment type="sequence caution" evidence="2">
    <conflict type="erroneous initiation">
        <sequence resource="EMBL-CDS" id="AAV78173"/>
    </conflict>
</comment>
<accession>Q5PFQ2</accession>
<dbReference type="EMBL" id="CP000026">
    <property type="protein sequence ID" value="AAV78173.1"/>
    <property type="status" value="ALT_INIT"/>
    <property type="molecule type" value="Genomic_DNA"/>
</dbReference>
<dbReference type="SMR" id="Q5PFQ2"/>
<dbReference type="KEGG" id="spt:SPA2288"/>
<dbReference type="HOGENOM" id="CLU_099839_1_0_6"/>
<dbReference type="Proteomes" id="UP000008185">
    <property type="component" value="Chromosome"/>
</dbReference>
<dbReference type="GO" id="GO:0005829">
    <property type="term" value="C:cytosol"/>
    <property type="evidence" value="ECO:0007669"/>
    <property type="project" value="TreeGrafter"/>
</dbReference>
<dbReference type="GO" id="GO:0000166">
    <property type="term" value="F:nucleotide binding"/>
    <property type="evidence" value="ECO:0007669"/>
    <property type="project" value="TreeGrafter"/>
</dbReference>
<dbReference type="CDD" id="cd11740">
    <property type="entry name" value="YajQ_like"/>
    <property type="match status" value="1"/>
</dbReference>
<dbReference type="FunFam" id="3.30.70.860:FF:000001">
    <property type="entry name" value="UPF0234 protein YajQ"/>
    <property type="match status" value="1"/>
</dbReference>
<dbReference type="FunFam" id="3.30.70.990:FF:000001">
    <property type="entry name" value="UPF0234 protein YajQ"/>
    <property type="match status" value="1"/>
</dbReference>
<dbReference type="Gene3D" id="3.30.70.860">
    <property type="match status" value="1"/>
</dbReference>
<dbReference type="Gene3D" id="3.30.70.990">
    <property type="entry name" value="YajQ-like, domain 2"/>
    <property type="match status" value="1"/>
</dbReference>
<dbReference type="HAMAP" id="MF_00632">
    <property type="entry name" value="YajQ"/>
    <property type="match status" value="1"/>
</dbReference>
<dbReference type="InterPro" id="IPR007551">
    <property type="entry name" value="DUF520"/>
</dbReference>
<dbReference type="InterPro" id="IPR035571">
    <property type="entry name" value="UPF0234-like_C"/>
</dbReference>
<dbReference type="InterPro" id="IPR035570">
    <property type="entry name" value="UPF0234_N"/>
</dbReference>
<dbReference type="InterPro" id="IPR036183">
    <property type="entry name" value="YajQ-like_sf"/>
</dbReference>
<dbReference type="NCBIfam" id="NF003819">
    <property type="entry name" value="PRK05412.1"/>
    <property type="match status" value="1"/>
</dbReference>
<dbReference type="PANTHER" id="PTHR30476">
    <property type="entry name" value="UPF0234 PROTEIN YAJQ"/>
    <property type="match status" value="1"/>
</dbReference>
<dbReference type="PANTHER" id="PTHR30476:SF0">
    <property type="entry name" value="UPF0234 PROTEIN YAJQ"/>
    <property type="match status" value="1"/>
</dbReference>
<dbReference type="Pfam" id="PF04461">
    <property type="entry name" value="DUF520"/>
    <property type="match status" value="1"/>
</dbReference>
<dbReference type="SUPFAM" id="SSF89963">
    <property type="entry name" value="YajQ-like"/>
    <property type="match status" value="2"/>
</dbReference>
<name>YAJQ_SALPA</name>
<gene>
    <name evidence="1" type="primary">yajQ</name>
    <name type="ordered locus">SPA2288</name>
</gene>
<reference key="1">
    <citation type="journal article" date="2004" name="Nat. Genet.">
        <title>Comparison of genome degradation in Paratyphi A and Typhi, human-restricted serovars of Salmonella enterica that cause typhoid.</title>
        <authorList>
            <person name="McClelland M."/>
            <person name="Sanderson K.E."/>
            <person name="Clifton S.W."/>
            <person name="Latreille P."/>
            <person name="Porwollik S."/>
            <person name="Sabo A."/>
            <person name="Meyer R."/>
            <person name="Bieri T."/>
            <person name="Ozersky P."/>
            <person name="McLellan M."/>
            <person name="Harkins C.R."/>
            <person name="Wang C."/>
            <person name="Nguyen C."/>
            <person name="Berghoff A."/>
            <person name="Elliott G."/>
            <person name="Kohlberg S."/>
            <person name="Strong C."/>
            <person name="Du F."/>
            <person name="Carter J."/>
            <person name="Kremizki C."/>
            <person name="Layman D."/>
            <person name="Leonard S."/>
            <person name="Sun H."/>
            <person name="Fulton L."/>
            <person name="Nash W."/>
            <person name="Miner T."/>
            <person name="Minx P."/>
            <person name="Delehaunty K."/>
            <person name="Fronick C."/>
            <person name="Magrini V."/>
            <person name="Nhan M."/>
            <person name="Warren W."/>
            <person name="Florea L."/>
            <person name="Spieth J."/>
            <person name="Wilson R.K."/>
        </authorList>
    </citation>
    <scope>NUCLEOTIDE SEQUENCE [LARGE SCALE GENOMIC DNA]</scope>
    <source>
        <strain>ATCC 9150 / SARB42</strain>
    </source>
</reference>
<protein>
    <recommendedName>
        <fullName evidence="1">Nucleotide-binding protein YajQ</fullName>
    </recommendedName>
</protein>
<sequence length="163" mass="18291">MPSFDIVSEVDLQEARNGVDNAVREVESRFDFRGVEATIALNDANKTIKVLSESDFQVNQLLDILRAKLLKRGIEGASLDVPDEFVHSSKTWYVEAKLKQGIESAVQKKIVKLIKDSKLKVQAQIQGEEIRVTGKSRDDLQSVMALVRGGDLGQPFQFKNFRD</sequence>
<keyword id="KW-0547">Nucleotide-binding</keyword>
<feature type="chain" id="PRO_0000261971" description="Nucleotide-binding protein YajQ">
    <location>
        <begin position="1"/>
        <end position="163"/>
    </location>
</feature>
<proteinExistence type="inferred from homology"/>
<evidence type="ECO:0000255" key="1">
    <source>
        <dbReference type="HAMAP-Rule" id="MF_00632"/>
    </source>
</evidence>
<evidence type="ECO:0000305" key="2"/>